<accession>B6I928</accession>
<reference key="1">
    <citation type="journal article" date="2008" name="DNA Res.">
        <title>Complete genome sequence and comparative analysis of the wild-type commensal Escherichia coli strain SE11 isolated from a healthy adult.</title>
        <authorList>
            <person name="Oshima K."/>
            <person name="Toh H."/>
            <person name="Ogura Y."/>
            <person name="Sasamoto H."/>
            <person name="Morita H."/>
            <person name="Park S.-H."/>
            <person name="Ooka T."/>
            <person name="Iyoda S."/>
            <person name="Taylor T.D."/>
            <person name="Hayashi T."/>
            <person name="Itoh K."/>
            <person name="Hattori M."/>
        </authorList>
    </citation>
    <scope>NUCLEOTIDE SEQUENCE [LARGE SCALE GENOMIC DNA]</scope>
    <source>
        <strain>SE11</strain>
    </source>
</reference>
<proteinExistence type="inferred from homology"/>
<comment type="function">
    <text evidence="1">Necessary for the introduction of cis unsaturation into fatty acids. Catalyzes the dehydration of (3R)-3-hydroxydecanoyl-ACP to E-(2)-decenoyl-ACP and then its isomerization to Z-(3)-decenoyl-ACP. Can catalyze the dehydratase reaction for beta-hydroxyacyl-ACPs with saturated chain lengths up to 16:0, being most active on intermediate chain length.</text>
</comment>
<comment type="catalytic activity">
    <reaction evidence="1">
        <text>a (3R)-hydroxyacyl-[ACP] = a (2E)-enoyl-[ACP] + H2O</text>
        <dbReference type="Rhea" id="RHEA:13097"/>
        <dbReference type="Rhea" id="RHEA-COMP:9925"/>
        <dbReference type="Rhea" id="RHEA-COMP:9945"/>
        <dbReference type="ChEBI" id="CHEBI:15377"/>
        <dbReference type="ChEBI" id="CHEBI:78784"/>
        <dbReference type="ChEBI" id="CHEBI:78827"/>
        <dbReference type="EC" id="4.2.1.59"/>
    </reaction>
</comment>
<comment type="catalytic activity">
    <reaction evidence="1">
        <text>(3R)-hydroxydecanoyl-[ACP] = (2E)-decenoyl-[ACP] + H2O</text>
        <dbReference type="Rhea" id="RHEA:41860"/>
        <dbReference type="Rhea" id="RHEA-COMP:9638"/>
        <dbReference type="Rhea" id="RHEA-COMP:9639"/>
        <dbReference type="ChEBI" id="CHEBI:15377"/>
        <dbReference type="ChEBI" id="CHEBI:78466"/>
        <dbReference type="ChEBI" id="CHEBI:78467"/>
    </reaction>
</comment>
<comment type="catalytic activity">
    <reaction evidence="1">
        <text>(2E)-decenoyl-[ACP] = (3Z)-decenoyl-[ACP]</text>
        <dbReference type="Rhea" id="RHEA:23568"/>
        <dbReference type="Rhea" id="RHEA-COMP:9639"/>
        <dbReference type="Rhea" id="RHEA-COMP:9927"/>
        <dbReference type="ChEBI" id="CHEBI:78467"/>
        <dbReference type="ChEBI" id="CHEBI:78798"/>
        <dbReference type="EC" id="5.3.3.14"/>
    </reaction>
</comment>
<comment type="pathway">
    <text evidence="1">Lipid metabolism; fatty acid biosynthesis.</text>
</comment>
<comment type="subunit">
    <text evidence="1">Homodimer.</text>
</comment>
<comment type="subcellular location">
    <subcellularLocation>
        <location evidence="1">Cytoplasm</location>
    </subcellularLocation>
</comment>
<comment type="similarity">
    <text evidence="1">Belongs to the thioester dehydratase family. FabA subfamily.</text>
</comment>
<organism>
    <name type="scientific">Escherichia coli (strain SE11)</name>
    <dbReference type="NCBI Taxonomy" id="409438"/>
    <lineage>
        <taxon>Bacteria</taxon>
        <taxon>Pseudomonadati</taxon>
        <taxon>Pseudomonadota</taxon>
        <taxon>Gammaproteobacteria</taxon>
        <taxon>Enterobacterales</taxon>
        <taxon>Enterobacteriaceae</taxon>
        <taxon>Escherichia</taxon>
    </lineage>
</organism>
<gene>
    <name evidence="1" type="primary">fabA</name>
    <name type="ordered locus">ECSE_1015</name>
</gene>
<keyword id="KW-0963">Cytoplasm</keyword>
<keyword id="KW-0275">Fatty acid biosynthesis</keyword>
<keyword id="KW-0276">Fatty acid metabolism</keyword>
<keyword id="KW-0413">Isomerase</keyword>
<keyword id="KW-0444">Lipid biosynthesis</keyword>
<keyword id="KW-0443">Lipid metabolism</keyword>
<keyword id="KW-0456">Lyase</keyword>
<feature type="chain" id="PRO_1000201179" description="3-hydroxydecanoyl-[acyl-carrier-protein] dehydratase">
    <location>
        <begin position="1"/>
        <end position="172"/>
    </location>
</feature>
<feature type="active site" evidence="1">
    <location>
        <position position="71"/>
    </location>
</feature>
<evidence type="ECO:0000255" key="1">
    <source>
        <dbReference type="HAMAP-Rule" id="MF_00405"/>
    </source>
</evidence>
<sequence length="172" mass="18999">MVDKRESYTKEDLLASGRGELFGTKGPQLPAPNMLMMDRVVKMTETGGNFDKGYVEAELDINPDLWFFGCHFIGDPVMPGCLGLDAMWQLVGFYLGWLGGEGKGRALGVGEVKFTGQVLPTAKKVTYRIHFKRIVNRRLIMGLADGEVLVDGRLIYTASDLKVGLFQDTSAF</sequence>
<protein>
    <recommendedName>
        <fullName evidence="1">3-hydroxydecanoyl-[acyl-carrier-protein] dehydratase</fullName>
        <ecNumber evidence="1">4.2.1.59</ecNumber>
    </recommendedName>
    <alternativeName>
        <fullName evidence="1">3-hydroxyacyl-[acyl-carrier-protein] dehydratase FabA</fullName>
    </alternativeName>
    <alternativeName>
        <fullName evidence="1">Beta-hydroxydecanoyl thioester dehydrase</fullName>
    </alternativeName>
    <alternativeName>
        <fullName evidence="1">Trans-2-decenoyl-[acyl-carrier-protein] isomerase</fullName>
        <ecNumber evidence="1">5.3.3.14</ecNumber>
    </alternativeName>
</protein>
<name>FABA_ECOSE</name>
<dbReference type="EC" id="4.2.1.59" evidence="1"/>
<dbReference type="EC" id="5.3.3.14" evidence="1"/>
<dbReference type="EMBL" id="AP009240">
    <property type="protein sequence ID" value="BAG76539.1"/>
    <property type="molecule type" value="Genomic_DNA"/>
</dbReference>
<dbReference type="RefSeq" id="WP_001609763.1">
    <property type="nucleotide sequence ID" value="NC_011415.1"/>
</dbReference>
<dbReference type="SMR" id="B6I928"/>
<dbReference type="KEGG" id="ecy:ECSE_1015"/>
<dbReference type="HOGENOM" id="CLU_097925_0_0_6"/>
<dbReference type="UniPathway" id="UPA00094"/>
<dbReference type="Proteomes" id="UP000008199">
    <property type="component" value="Chromosome"/>
</dbReference>
<dbReference type="GO" id="GO:0005737">
    <property type="term" value="C:cytoplasm"/>
    <property type="evidence" value="ECO:0007669"/>
    <property type="project" value="UniProtKB-SubCell"/>
</dbReference>
<dbReference type="GO" id="GO:0019171">
    <property type="term" value="F:(3R)-hydroxyacyl-[acyl-carrier-protein] dehydratase activity"/>
    <property type="evidence" value="ECO:0007669"/>
    <property type="project" value="UniProtKB-UniRule"/>
</dbReference>
<dbReference type="GO" id="GO:0034017">
    <property type="term" value="F:trans-2-decenoyl-acyl-carrier-protein isomerase activity"/>
    <property type="evidence" value="ECO:0007669"/>
    <property type="project" value="UniProtKB-UniRule"/>
</dbReference>
<dbReference type="GO" id="GO:0006636">
    <property type="term" value="P:unsaturated fatty acid biosynthetic process"/>
    <property type="evidence" value="ECO:0007669"/>
    <property type="project" value="UniProtKB-UniRule"/>
</dbReference>
<dbReference type="CDD" id="cd01287">
    <property type="entry name" value="FabA"/>
    <property type="match status" value="1"/>
</dbReference>
<dbReference type="FunFam" id="3.10.129.10:FF:000003">
    <property type="entry name" value="3-hydroxydecanoyl-[acyl-carrier-protein] dehydratase"/>
    <property type="match status" value="1"/>
</dbReference>
<dbReference type="Gene3D" id="3.10.129.10">
    <property type="entry name" value="Hotdog Thioesterase"/>
    <property type="match status" value="1"/>
</dbReference>
<dbReference type="HAMAP" id="MF_00405">
    <property type="entry name" value="FabA"/>
    <property type="match status" value="1"/>
</dbReference>
<dbReference type="InterPro" id="IPR010083">
    <property type="entry name" value="FabA"/>
</dbReference>
<dbReference type="InterPro" id="IPR013114">
    <property type="entry name" value="FabA_FabZ"/>
</dbReference>
<dbReference type="InterPro" id="IPR029069">
    <property type="entry name" value="HotDog_dom_sf"/>
</dbReference>
<dbReference type="NCBIfam" id="TIGR01749">
    <property type="entry name" value="fabA"/>
    <property type="match status" value="1"/>
</dbReference>
<dbReference type="NCBIfam" id="NF003509">
    <property type="entry name" value="PRK05174.1"/>
    <property type="match status" value="1"/>
</dbReference>
<dbReference type="PANTHER" id="PTHR30272">
    <property type="entry name" value="3-HYDROXYACYL-[ACYL-CARRIER-PROTEIN] DEHYDRATASE"/>
    <property type="match status" value="1"/>
</dbReference>
<dbReference type="PANTHER" id="PTHR30272:SF8">
    <property type="entry name" value="3-HYDROXYDECANOYL-[ACYL-CARRIER-PROTEIN] DEHYDRATASE"/>
    <property type="match status" value="1"/>
</dbReference>
<dbReference type="Pfam" id="PF07977">
    <property type="entry name" value="FabA"/>
    <property type="match status" value="1"/>
</dbReference>
<dbReference type="SUPFAM" id="SSF54637">
    <property type="entry name" value="Thioesterase/thiol ester dehydrase-isomerase"/>
    <property type="match status" value="1"/>
</dbReference>